<evidence type="ECO:0000255" key="1">
    <source>
        <dbReference type="HAMAP-Rule" id="MF_00392"/>
    </source>
</evidence>
<comment type="function">
    <text evidence="1">Condensation of UDP-2,3-diacylglucosamine and 2,3-diacylglucosamine-1-phosphate to form lipid A disaccharide, a precursor of lipid A, a phosphorylated glycolipid that anchors the lipopolysaccharide to the outer membrane of the cell.</text>
</comment>
<comment type="catalytic activity">
    <reaction evidence="1">
        <text>a lipid X + a UDP-2-N,3-O-bis[(3R)-3-hydroxyacyl]-alpha-D-glucosamine = a lipid A disaccharide + UDP + H(+)</text>
        <dbReference type="Rhea" id="RHEA:67828"/>
        <dbReference type="ChEBI" id="CHEBI:15378"/>
        <dbReference type="ChEBI" id="CHEBI:58223"/>
        <dbReference type="ChEBI" id="CHEBI:137748"/>
        <dbReference type="ChEBI" id="CHEBI:176338"/>
        <dbReference type="ChEBI" id="CHEBI:176343"/>
        <dbReference type="EC" id="2.4.1.182"/>
    </reaction>
</comment>
<comment type="pathway">
    <text evidence="1">Bacterial outer membrane biogenesis; LPS lipid A biosynthesis.</text>
</comment>
<comment type="similarity">
    <text evidence="1">Belongs to the LpxB family.</text>
</comment>
<protein>
    <recommendedName>
        <fullName evidence="1">Lipid-A-disaccharide synthase</fullName>
        <ecNumber evidence="1">2.4.1.182</ecNumber>
    </recommendedName>
</protein>
<keyword id="KW-0328">Glycosyltransferase</keyword>
<keyword id="KW-0441">Lipid A biosynthesis</keyword>
<keyword id="KW-0444">Lipid biosynthesis</keyword>
<keyword id="KW-0443">Lipid metabolism</keyword>
<keyword id="KW-0808">Transferase</keyword>
<gene>
    <name evidence="1" type="primary">lpxB</name>
    <name type="ordered locus">Pfl01_1114</name>
</gene>
<feature type="chain" id="PRO_0000255208" description="Lipid-A-disaccharide synthase">
    <location>
        <begin position="1"/>
        <end position="376"/>
    </location>
</feature>
<dbReference type="EC" id="2.4.1.182" evidence="1"/>
<dbReference type="EMBL" id="CP000094">
    <property type="protein sequence ID" value="ABA72857.1"/>
    <property type="molecule type" value="Genomic_DNA"/>
</dbReference>
<dbReference type="RefSeq" id="WP_011332691.1">
    <property type="nucleotide sequence ID" value="NC_007492.2"/>
</dbReference>
<dbReference type="SMR" id="Q3KH99"/>
<dbReference type="CAZy" id="GT19">
    <property type="family name" value="Glycosyltransferase Family 19"/>
</dbReference>
<dbReference type="KEGG" id="pfo:Pfl01_1114"/>
<dbReference type="eggNOG" id="COG0763">
    <property type="taxonomic scope" value="Bacteria"/>
</dbReference>
<dbReference type="HOGENOM" id="CLU_036577_3_0_6"/>
<dbReference type="UniPathway" id="UPA00973"/>
<dbReference type="Proteomes" id="UP000002704">
    <property type="component" value="Chromosome"/>
</dbReference>
<dbReference type="GO" id="GO:0016020">
    <property type="term" value="C:membrane"/>
    <property type="evidence" value="ECO:0007669"/>
    <property type="project" value="GOC"/>
</dbReference>
<dbReference type="GO" id="GO:0008915">
    <property type="term" value="F:lipid-A-disaccharide synthase activity"/>
    <property type="evidence" value="ECO:0007669"/>
    <property type="project" value="UniProtKB-UniRule"/>
</dbReference>
<dbReference type="GO" id="GO:0005543">
    <property type="term" value="F:phospholipid binding"/>
    <property type="evidence" value="ECO:0007669"/>
    <property type="project" value="TreeGrafter"/>
</dbReference>
<dbReference type="GO" id="GO:0009245">
    <property type="term" value="P:lipid A biosynthetic process"/>
    <property type="evidence" value="ECO:0007669"/>
    <property type="project" value="UniProtKB-UniRule"/>
</dbReference>
<dbReference type="Gene3D" id="3.40.50.2000">
    <property type="entry name" value="Glycogen Phosphorylase B"/>
    <property type="match status" value="1"/>
</dbReference>
<dbReference type="HAMAP" id="MF_00392">
    <property type="entry name" value="LpxB"/>
    <property type="match status" value="1"/>
</dbReference>
<dbReference type="InterPro" id="IPR003835">
    <property type="entry name" value="Glyco_trans_19"/>
</dbReference>
<dbReference type="NCBIfam" id="TIGR00215">
    <property type="entry name" value="lpxB"/>
    <property type="match status" value="1"/>
</dbReference>
<dbReference type="PANTHER" id="PTHR30372">
    <property type="entry name" value="LIPID-A-DISACCHARIDE SYNTHASE"/>
    <property type="match status" value="1"/>
</dbReference>
<dbReference type="PANTHER" id="PTHR30372:SF4">
    <property type="entry name" value="LIPID-A-DISACCHARIDE SYNTHASE, MITOCHONDRIAL-RELATED"/>
    <property type="match status" value="1"/>
</dbReference>
<dbReference type="Pfam" id="PF02684">
    <property type="entry name" value="LpxB"/>
    <property type="match status" value="1"/>
</dbReference>
<dbReference type="SUPFAM" id="SSF53756">
    <property type="entry name" value="UDP-Glycosyltransferase/glycogen phosphorylase"/>
    <property type="match status" value="1"/>
</dbReference>
<organism>
    <name type="scientific">Pseudomonas fluorescens (strain Pf0-1)</name>
    <dbReference type="NCBI Taxonomy" id="205922"/>
    <lineage>
        <taxon>Bacteria</taxon>
        <taxon>Pseudomonadati</taxon>
        <taxon>Pseudomonadota</taxon>
        <taxon>Gammaproteobacteria</taxon>
        <taxon>Pseudomonadales</taxon>
        <taxon>Pseudomonadaceae</taxon>
        <taxon>Pseudomonas</taxon>
    </lineage>
</organism>
<accession>Q3KH99</accession>
<sequence>MANLRIALVAGEASGDILGAGLMRALKAQHPAVEFIGVGGPLMQAEGLTSYFPMERLSVMGLVEVLGRLRELLKRRKDLIATLIAEKPDVFIGIDAPDFNLNIELKLRQAGIKTVHYVSPSVWAWRQKRVLKIREGCDLMLTLLPFEARFYEEKGVPVRFVGHTLADTIPLEADRAAARAELGLPDGPLVALMPGSRGGEVSRLGALFLDTAQRLRAMRPGVRFVIPCANPERRAQLEELLAGRDLPVTLLDGKSHLALAACNAVLIASGTATLEALLYKRPMVVAYRLAPLTFWILKRMVKSPYVSLPNLLAQRLLVPELLQDDATVEALAQTLSPLIDGGEEQTRGFDEIHRTLRLDASNQAADAVLNLIGQTR</sequence>
<proteinExistence type="inferred from homology"/>
<reference key="1">
    <citation type="journal article" date="2009" name="Genome Biol.">
        <title>Genomic and genetic analyses of diversity and plant interactions of Pseudomonas fluorescens.</title>
        <authorList>
            <person name="Silby M.W."/>
            <person name="Cerdeno-Tarraga A.M."/>
            <person name="Vernikos G.S."/>
            <person name="Giddens S.R."/>
            <person name="Jackson R.W."/>
            <person name="Preston G.M."/>
            <person name="Zhang X.-X."/>
            <person name="Moon C.D."/>
            <person name="Gehrig S.M."/>
            <person name="Godfrey S.A.C."/>
            <person name="Knight C.G."/>
            <person name="Malone J.G."/>
            <person name="Robinson Z."/>
            <person name="Spiers A.J."/>
            <person name="Harris S."/>
            <person name="Challis G.L."/>
            <person name="Yaxley A.M."/>
            <person name="Harris D."/>
            <person name="Seeger K."/>
            <person name="Murphy L."/>
            <person name="Rutter S."/>
            <person name="Squares R."/>
            <person name="Quail M.A."/>
            <person name="Saunders E."/>
            <person name="Mavromatis K."/>
            <person name="Brettin T.S."/>
            <person name="Bentley S.D."/>
            <person name="Hothersall J."/>
            <person name="Stephens E."/>
            <person name="Thomas C.M."/>
            <person name="Parkhill J."/>
            <person name="Levy S.B."/>
            <person name="Rainey P.B."/>
            <person name="Thomson N.R."/>
        </authorList>
    </citation>
    <scope>NUCLEOTIDE SEQUENCE [LARGE SCALE GENOMIC DNA]</scope>
    <source>
        <strain>Pf0-1</strain>
    </source>
</reference>
<name>LPXB_PSEPF</name>